<accession>C3NH92</accession>
<keyword id="KW-0687">Ribonucleoprotein</keyword>
<keyword id="KW-0689">Ribosomal protein</keyword>
<name>RL32_SACI1</name>
<protein>
    <recommendedName>
        <fullName evidence="1">Large ribosomal subunit protein eL32</fullName>
    </recommendedName>
    <alternativeName>
        <fullName evidence="2">50S ribosomal protein L32e</fullName>
    </alternativeName>
</protein>
<evidence type="ECO:0000255" key="1">
    <source>
        <dbReference type="HAMAP-Rule" id="MF_00810"/>
    </source>
</evidence>
<evidence type="ECO:0000305" key="2"/>
<dbReference type="EMBL" id="CP001404">
    <property type="protein sequence ID" value="ACP48502.1"/>
    <property type="molecule type" value="Genomic_DNA"/>
</dbReference>
<dbReference type="RefSeq" id="WP_012711435.1">
    <property type="nucleotide sequence ID" value="NC_012623.1"/>
</dbReference>
<dbReference type="SMR" id="C3NH92"/>
<dbReference type="KEGG" id="sin:YN1551_1411"/>
<dbReference type="HOGENOM" id="CLU_071479_3_0_2"/>
<dbReference type="Proteomes" id="UP000006818">
    <property type="component" value="Chromosome"/>
</dbReference>
<dbReference type="GO" id="GO:0022625">
    <property type="term" value="C:cytosolic large ribosomal subunit"/>
    <property type="evidence" value="ECO:0007669"/>
    <property type="project" value="TreeGrafter"/>
</dbReference>
<dbReference type="GO" id="GO:0003735">
    <property type="term" value="F:structural constituent of ribosome"/>
    <property type="evidence" value="ECO:0007669"/>
    <property type="project" value="InterPro"/>
</dbReference>
<dbReference type="GO" id="GO:0006412">
    <property type="term" value="P:translation"/>
    <property type="evidence" value="ECO:0007669"/>
    <property type="project" value="UniProtKB-UniRule"/>
</dbReference>
<dbReference type="CDD" id="cd00513">
    <property type="entry name" value="Ribosomal_L32_L32e"/>
    <property type="match status" value="1"/>
</dbReference>
<dbReference type="HAMAP" id="MF_00810">
    <property type="entry name" value="Ribosomal_eL32"/>
    <property type="match status" value="1"/>
</dbReference>
<dbReference type="InterPro" id="IPR001515">
    <property type="entry name" value="Ribosomal_eL32"/>
</dbReference>
<dbReference type="InterPro" id="IPR023654">
    <property type="entry name" value="Ribosomal_eL32_arc"/>
</dbReference>
<dbReference type="InterPro" id="IPR018263">
    <property type="entry name" value="Ribosomal_eL32_CS"/>
</dbReference>
<dbReference type="InterPro" id="IPR036351">
    <property type="entry name" value="Ribosomal_eL32_sf"/>
</dbReference>
<dbReference type="NCBIfam" id="NF006332">
    <property type="entry name" value="PRK08562.1"/>
    <property type="match status" value="1"/>
</dbReference>
<dbReference type="PANTHER" id="PTHR23413">
    <property type="entry name" value="60S RIBOSOMAL PROTEIN L32 AND DNA-DIRECTED RNA POLYMERASE II, SUBUNIT N"/>
    <property type="match status" value="1"/>
</dbReference>
<dbReference type="PANTHER" id="PTHR23413:SF1">
    <property type="entry name" value="RIBOSOMAL PROTEIN L32"/>
    <property type="match status" value="1"/>
</dbReference>
<dbReference type="Pfam" id="PF01655">
    <property type="entry name" value="Ribosomal_L32e"/>
    <property type="match status" value="1"/>
</dbReference>
<dbReference type="SMART" id="SM01393">
    <property type="entry name" value="Ribosomal_L32e"/>
    <property type="match status" value="1"/>
</dbReference>
<dbReference type="SUPFAM" id="SSF52042">
    <property type="entry name" value="Ribosomal protein L32e"/>
    <property type="match status" value="1"/>
</dbReference>
<dbReference type="PROSITE" id="PS00580">
    <property type="entry name" value="RIBOSOMAL_L32E"/>
    <property type="match status" value="1"/>
</dbReference>
<reference key="1">
    <citation type="journal article" date="2009" name="Proc. Natl. Acad. Sci. U.S.A.">
        <title>Biogeography of the Sulfolobus islandicus pan-genome.</title>
        <authorList>
            <person name="Reno M.L."/>
            <person name="Held N.L."/>
            <person name="Fields C.J."/>
            <person name="Burke P.V."/>
            <person name="Whitaker R.J."/>
        </authorList>
    </citation>
    <scope>NUCLEOTIDE SEQUENCE [LARGE SCALE GENOMIC DNA]</scope>
    <source>
        <strain>Y.N.15.51 / Yellowstone #2</strain>
    </source>
</reference>
<sequence>MTEEKIQSYRKKIYVIRQKLKAKKPRFLRYDSDKFFRLGRQEKWRRPYGRDNKTRLKVRGFPAIVSVGYRLPKEVRGFHPSGLRQVIVHNVNDLVKVQNQKDSVIVTIASSVGFKKRLEILNKARELGLKVSNEGVSA</sequence>
<comment type="similarity">
    <text evidence="1">Belongs to the eukaryotic ribosomal protein eL32 family.</text>
</comment>
<gene>
    <name evidence="1" type="primary">rpl32e</name>
    <name type="ordered locus">YN1551_1411</name>
</gene>
<proteinExistence type="inferred from homology"/>
<organism>
    <name type="scientific">Saccharolobus islandicus (strain Y.N.15.51 / Yellowstone #2)</name>
    <name type="common">Sulfolobus islandicus</name>
    <dbReference type="NCBI Taxonomy" id="419942"/>
    <lineage>
        <taxon>Archaea</taxon>
        <taxon>Thermoproteota</taxon>
        <taxon>Thermoprotei</taxon>
        <taxon>Sulfolobales</taxon>
        <taxon>Sulfolobaceae</taxon>
        <taxon>Saccharolobus</taxon>
    </lineage>
</organism>
<feature type="chain" id="PRO_1000213014" description="Large ribosomal subunit protein eL32">
    <location>
        <begin position="1"/>
        <end position="138"/>
    </location>
</feature>